<reference key="1">
    <citation type="submission" date="2003-11" db="EMBL/GenBank/DDBJ databases">
        <title>Molecular cloning, expression of chicken- and goose-type lysozyme gene of torafugu (Takifugu rubripes).</title>
        <authorList>
            <person name="Miyadai T."/>
            <person name="Ootani M."/>
            <person name="Iwata K."/>
        </authorList>
    </citation>
    <scope>NUCLEOTIDE SEQUENCE [MRNA]</scope>
    <source>
        <tissue>Liver</tissue>
    </source>
</reference>
<protein>
    <recommendedName>
        <fullName>Lysozyme C</fullName>
        <ecNumber>3.2.1.17</ecNumber>
    </recommendedName>
    <alternativeName>
        <fullName>1,4-beta-N-acetylmuramidase C</fullName>
    </alternativeName>
</protein>
<proteinExistence type="evidence at transcript level"/>
<comment type="function">
    <text evidence="3">Lysozymes have primarily a bacteriolytic function; those in tissues and body fluids are associated with the monocyte-macrophage system and enhance the activity of immunoagents.</text>
</comment>
<comment type="catalytic activity">
    <reaction>
        <text>Hydrolysis of (1-&gt;4)-beta-linkages between N-acetylmuramic acid and N-acetyl-D-glucosamine residues in a peptidoglycan and between N-acetyl-D-glucosamine residues in chitodextrins.</text>
        <dbReference type="EC" id="3.2.1.17"/>
    </reaction>
</comment>
<comment type="subunit">
    <text evidence="1">Monomer.</text>
</comment>
<comment type="subcellular location">
    <subcellularLocation>
        <location evidence="1">Secreted</location>
    </subcellularLocation>
</comment>
<comment type="miscellaneous">
    <text>Lysozyme C is capable of both hydrolysis and transglycosylation; it also shows a slight esterase activity. It acts rapidly on both peptide-substituted and unsubstituted peptidoglycan, and slowly on chitin oligosaccharides.</text>
</comment>
<comment type="similarity">
    <text evidence="3">Belongs to the glycosyl hydrolase 22 family.</text>
</comment>
<feature type="signal peptide" evidence="2">
    <location>
        <begin position="1"/>
        <end position="15"/>
    </location>
</feature>
<feature type="chain" id="PRO_0000018500" description="Lysozyme C">
    <location>
        <begin position="16"/>
        <end position="143"/>
    </location>
</feature>
<feature type="domain" description="C-type lysozyme" evidence="3">
    <location>
        <begin position="16"/>
        <end position="143"/>
    </location>
</feature>
<feature type="active site" evidence="3">
    <location>
        <position position="50"/>
    </location>
</feature>
<feature type="active site" evidence="3">
    <location>
        <position position="67"/>
    </location>
</feature>
<feature type="disulfide bond" evidence="3">
    <location>
        <begin position="21"/>
        <end position="141"/>
    </location>
</feature>
<feature type="disulfide bond" evidence="3">
    <location>
        <begin position="45"/>
        <end position="129"/>
    </location>
</feature>
<feature type="disulfide bond" evidence="3">
    <location>
        <begin position="79"/>
        <end position="94"/>
    </location>
</feature>
<feature type="disulfide bond" evidence="3">
    <location>
        <begin position="90"/>
        <end position="108"/>
    </location>
</feature>
<dbReference type="EC" id="3.2.1.17"/>
<dbReference type="EMBL" id="AB126243">
    <property type="protein sequence ID" value="BAD02933.1"/>
    <property type="molecule type" value="mRNA"/>
</dbReference>
<dbReference type="RefSeq" id="NP_001027914.1">
    <property type="nucleotide sequence ID" value="NM_001032742.1"/>
</dbReference>
<dbReference type="SMR" id="P61944"/>
<dbReference type="STRING" id="31033.ENSTRUP00000015311"/>
<dbReference type="CAZy" id="GH22">
    <property type="family name" value="Glycoside Hydrolase Family 22"/>
</dbReference>
<dbReference type="Ensembl" id="ENSTRUT00000015380.3">
    <property type="protein sequence ID" value="ENSTRUP00000015311.2"/>
    <property type="gene ID" value="ENSTRUG00000006269.3"/>
</dbReference>
<dbReference type="GeneID" id="445925"/>
<dbReference type="KEGG" id="tru:445925"/>
<dbReference type="CTD" id="4069"/>
<dbReference type="eggNOG" id="ENOG502RZU4">
    <property type="taxonomic scope" value="Eukaryota"/>
</dbReference>
<dbReference type="GeneTree" id="ENSGT00940000153832"/>
<dbReference type="InParanoid" id="P61944"/>
<dbReference type="OMA" id="VYERCEF"/>
<dbReference type="OrthoDB" id="17373at2759"/>
<dbReference type="Proteomes" id="UP000005226">
    <property type="component" value="Chromosome 6"/>
</dbReference>
<dbReference type="GO" id="GO:0005576">
    <property type="term" value="C:extracellular region"/>
    <property type="evidence" value="ECO:0007669"/>
    <property type="project" value="UniProtKB-SubCell"/>
</dbReference>
<dbReference type="GO" id="GO:0003796">
    <property type="term" value="F:lysozyme activity"/>
    <property type="evidence" value="ECO:0007669"/>
    <property type="project" value="UniProtKB-EC"/>
</dbReference>
<dbReference type="GO" id="GO:0042742">
    <property type="term" value="P:defense response to bacterium"/>
    <property type="evidence" value="ECO:0007669"/>
    <property type="project" value="UniProtKB-KW"/>
</dbReference>
<dbReference type="GO" id="GO:0031640">
    <property type="term" value="P:killing of cells of another organism"/>
    <property type="evidence" value="ECO:0007669"/>
    <property type="project" value="UniProtKB-KW"/>
</dbReference>
<dbReference type="CDD" id="cd16897">
    <property type="entry name" value="LYZ_C"/>
    <property type="match status" value="1"/>
</dbReference>
<dbReference type="FunFam" id="1.10.530.10:FF:000001">
    <property type="entry name" value="Lysozyme C"/>
    <property type="match status" value="1"/>
</dbReference>
<dbReference type="Gene3D" id="1.10.530.10">
    <property type="match status" value="1"/>
</dbReference>
<dbReference type="InterPro" id="IPR001916">
    <property type="entry name" value="Glyco_hydro_22"/>
</dbReference>
<dbReference type="InterPro" id="IPR000974">
    <property type="entry name" value="Glyco_hydro_22_lys"/>
</dbReference>
<dbReference type="InterPro" id="IPR023346">
    <property type="entry name" value="Lysozyme-like_dom_sf"/>
</dbReference>
<dbReference type="PANTHER" id="PTHR11407">
    <property type="entry name" value="LYSOZYME C"/>
    <property type="match status" value="1"/>
</dbReference>
<dbReference type="PANTHER" id="PTHR11407:SF63">
    <property type="entry name" value="LYSOZYME C"/>
    <property type="match status" value="1"/>
</dbReference>
<dbReference type="Pfam" id="PF00062">
    <property type="entry name" value="Lys"/>
    <property type="match status" value="1"/>
</dbReference>
<dbReference type="PRINTS" id="PR00137">
    <property type="entry name" value="LYSOZYME"/>
</dbReference>
<dbReference type="PRINTS" id="PR00135">
    <property type="entry name" value="LYZLACT"/>
</dbReference>
<dbReference type="SMART" id="SM00263">
    <property type="entry name" value="LYZ1"/>
    <property type="match status" value="1"/>
</dbReference>
<dbReference type="SUPFAM" id="SSF53955">
    <property type="entry name" value="Lysozyme-like"/>
    <property type="match status" value="1"/>
</dbReference>
<dbReference type="PROSITE" id="PS51348">
    <property type="entry name" value="GLYCOSYL_HYDROL_F22_2"/>
    <property type="match status" value="1"/>
</dbReference>
<sequence>MKIPVFLLLLALANAKVFQRCEWARVLKARGMDGYRGISLADWVCLSKWESQYNTNAINHNTDGSTDYGIFQINSRWWCNDDRIPTRNACNIKCSALQTDDVTVAINCAKRVVSDPQGIRAWVAWNRHCQNRDLSAYIAGCGL</sequence>
<evidence type="ECO:0000250" key="1"/>
<evidence type="ECO:0000255" key="2"/>
<evidence type="ECO:0000255" key="3">
    <source>
        <dbReference type="PROSITE-ProRule" id="PRU00680"/>
    </source>
</evidence>
<organism>
    <name type="scientific">Takifugu rubripes</name>
    <name type="common">Japanese pufferfish</name>
    <name type="synonym">Fugu rubripes</name>
    <dbReference type="NCBI Taxonomy" id="31033"/>
    <lineage>
        <taxon>Eukaryota</taxon>
        <taxon>Metazoa</taxon>
        <taxon>Chordata</taxon>
        <taxon>Craniata</taxon>
        <taxon>Vertebrata</taxon>
        <taxon>Euteleostomi</taxon>
        <taxon>Actinopterygii</taxon>
        <taxon>Neopterygii</taxon>
        <taxon>Teleostei</taxon>
        <taxon>Neoteleostei</taxon>
        <taxon>Acanthomorphata</taxon>
        <taxon>Eupercaria</taxon>
        <taxon>Tetraodontiformes</taxon>
        <taxon>Tetradontoidea</taxon>
        <taxon>Tetraodontidae</taxon>
        <taxon>Takifugu</taxon>
    </lineage>
</organism>
<name>LYSC_TAKRU</name>
<keyword id="KW-0929">Antimicrobial</keyword>
<keyword id="KW-0081">Bacteriolytic enzyme</keyword>
<keyword id="KW-1015">Disulfide bond</keyword>
<keyword id="KW-0326">Glycosidase</keyword>
<keyword id="KW-0378">Hydrolase</keyword>
<keyword id="KW-1185">Reference proteome</keyword>
<keyword id="KW-0964">Secreted</keyword>
<keyword id="KW-0732">Signal</keyword>
<accession>P61944</accession>